<feature type="chain" id="PRO_0000289730" description="sn-glycerol-3-phosphate import ATP-binding protein UgpC">
    <location>
        <begin position="1"/>
        <end position="362"/>
    </location>
</feature>
<feature type="domain" description="ABC transporter" evidence="1">
    <location>
        <begin position="4"/>
        <end position="235"/>
    </location>
</feature>
<feature type="binding site" evidence="1">
    <location>
        <begin position="37"/>
        <end position="44"/>
    </location>
    <ligand>
        <name>ATP</name>
        <dbReference type="ChEBI" id="CHEBI:30616"/>
    </ligand>
</feature>
<name>UGPC_BORBR</name>
<reference key="1">
    <citation type="journal article" date="2003" name="Nat. Genet.">
        <title>Comparative analysis of the genome sequences of Bordetella pertussis, Bordetella parapertussis and Bordetella bronchiseptica.</title>
        <authorList>
            <person name="Parkhill J."/>
            <person name="Sebaihia M."/>
            <person name="Preston A."/>
            <person name="Murphy L.D."/>
            <person name="Thomson N.R."/>
            <person name="Harris D.E."/>
            <person name="Holden M.T.G."/>
            <person name="Churcher C.M."/>
            <person name="Bentley S.D."/>
            <person name="Mungall K.L."/>
            <person name="Cerdeno-Tarraga A.-M."/>
            <person name="Temple L."/>
            <person name="James K.D."/>
            <person name="Harris B."/>
            <person name="Quail M.A."/>
            <person name="Achtman M."/>
            <person name="Atkin R."/>
            <person name="Baker S."/>
            <person name="Basham D."/>
            <person name="Bason N."/>
            <person name="Cherevach I."/>
            <person name="Chillingworth T."/>
            <person name="Collins M."/>
            <person name="Cronin A."/>
            <person name="Davis P."/>
            <person name="Doggett J."/>
            <person name="Feltwell T."/>
            <person name="Goble A."/>
            <person name="Hamlin N."/>
            <person name="Hauser H."/>
            <person name="Holroyd S."/>
            <person name="Jagels K."/>
            <person name="Leather S."/>
            <person name="Moule S."/>
            <person name="Norberczak H."/>
            <person name="O'Neil S."/>
            <person name="Ormond D."/>
            <person name="Price C."/>
            <person name="Rabbinowitsch E."/>
            <person name="Rutter S."/>
            <person name="Sanders M."/>
            <person name="Saunders D."/>
            <person name="Seeger K."/>
            <person name="Sharp S."/>
            <person name="Simmonds M."/>
            <person name="Skelton J."/>
            <person name="Squares R."/>
            <person name="Squares S."/>
            <person name="Stevens K."/>
            <person name="Unwin L."/>
            <person name="Whitehead S."/>
            <person name="Barrell B.G."/>
            <person name="Maskell D.J."/>
        </authorList>
    </citation>
    <scope>NUCLEOTIDE SEQUENCE [LARGE SCALE GENOMIC DNA]</scope>
    <source>
        <strain>ATCC BAA-588 / NCTC 13252 / RB50</strain>
    </source>
</reference>
<dbReference type="EC" id="7.6.2.10" evidence="1"/>
<dbReference type="EMBL" id="BX640445">
    <property type="protein sequence ID" value="CAE33407.1"/>
    <property type="molecule type" value="Genomic_DNA"/>
</dbReference>
<dbReference type="RefSeq" id="WP_003811254.1">
    <property type="nucleotide sequence ID" value="NC_002927.3"/>
</dbReference>
<dbReference type="SMR" id="Q7WID6"/>
<dbReference type="KEGG" id="bbr:BB2915"/>
<dbReference type="eggNOG" id="COG3842">
    <property type="taxonomic scope" value="Bacteria"/>
</dbReference>
<dbReference type="HOGENOM" id="CLU_000604_1_1_4"/>
<dbReference type="Proteomes" id="UP000001027">
    <property type="component" value="Chromosome"/>
</dbReference>
<dbReference type="GO" id="GO:0055052">
    <property type="term" value="C:ATP-binding cassette (ABC) transporter complex, substrate-binding subunit-containing"/>
    <property type="evidence" value="ECO:0007669"/>
    <property type="project" value="TreeGrafter"/>
</dbReference>
<dbReference type="GO" id="GO:0015430">
    <property type="term" value="F:ABC-type glycerol-3-phosphate transporter activity"/>
    <property type="evidence" value="ECO:0007669"/>
    <property type="project" value="UniProtKB-EC"/>
</dbReference>
<dbReference type="GO" id="GO:0005524">
    <property type="term" value="F:ATP binding"/>
    <property type="evidence" value="ECO:0007669"/>
    <property type="project" value="UniProtKB-KW"/>
</dbReference>
<dbReference type="GO" id="GO:0016887">
    <property type="term" value="F:ATP hydrolysis activity"/>
    <property type="evidence" value="ECO:0007669"/>
    <property type="project" value="InterPro"/>
</dbReference>
<dbReference type="GO" id="GO:0008643">
    <property type="term" value="P:carbohydrate transport"/>
    <property type="evidence" value="ECO:0007669"/>
    <property type="project" value="InterPro"/>
</dbReference>
<dbReference type="GO" id="GO:0001407">
    <property type="term" value="P:glycerophosphodiester transmembrane transport"/>
    <property type="evidence" value="ECO:0007669"/>
    <property type="project" value="TreeGrafter"/>
</dbReference>
<dbReference type="CDD" id="cd03301">
    <property type="entry name" value="ABC_MalK_N"/>
    <property type="match status" value="1"/>
</dbReference>
<dbReference type="FunFam" id="3.40.50.300:FF:000042">
    <property type="entry name" value="Maltose/maltodextrin ABC transporter, ATP-binding protein"/>
    <property type="match status" value="1"/>
</dbReference>
<dbReference type="Gene3D" id="2.40.50.100">
    <property type="match status" value="1"/>
</dbReference>
<dbReference type="Gene3D" id="2.40.50.140">
    <property type="entry name" value="Nucleic acid-binding proteins"/>
    <property type="match status" value="1"/>
</dbReference>
<dbReference type="Gene3D" id="3.40.50.300">
    <property type="entry name" value="P-loop containing nucleotide triphosphate hydrolases"/>
    <property type="match status" value="1"/>
</dbReference>
<dbReference type="InterPro" id="IPR003593">
    <property type="entry name" value="AAA+_ATPase"/>
</dbReference>
<dbReference type="InterPro" id="IPR003439">
    <property type="entry name" value="ABC_transporter-like_ATP-bd"/>
</dbReference>
<dbReference type="InterPro" id="IPR017871">
    <property type="entry name" value="ABC_transporter-like_CS"/>
</dbReference>
<dbReference type="InterPro" id="IPR015855">
    <property type="entry name" value="ABC_transpr_MalK-like"/>
</dbReference>
<dbReference type="InterPro" id="IPR047641">
    <property type="entry name" value="ABC_transpr_MalK/UgpC-like"/>
</dbReference>
<dbReference type="InterPro" id="IPR008995">
    <property type="entry name" value="Mo/tungstate-bd_C_term_dom"/>
</dbReference>
<dbReference type="InterPro" id="IPR012340">
    <property type="entry name" value="NA-bd_OB-fold"/>
</dbReference>
<dbReference type="InterPro" id="IPR040582">
    <property type="entry name" value="OB_MalK-like"/>
</dbReference>
<dbReference type="InterPro" id="IPR027417">
    <property type="entry name" value="P-loop_NTPase"/>
</dbReference>
<dbReference type="NCBIfam" id="NF008653">
    <property type="entry name" value="PRK11650.1"/>
    <property type="match status" value="1"/>
</dbReference>
<dbReference type="PANTHER" id="PTHR43875">
    <property type="entry name" value="MALTODEXTRIN IMPORT ATP-BINDING PROTEIN MSMX"/>
    <property type="match status" value="1"/>
</dbReference>
<dbReference type="PANTHER" id="PTHR43875:SF12">
    <property type="entry name" value="SN-GLYCEROL-3-PHOSPHATE IMPORT ATP-BINDING PROTEIN UGPC"/>
    <property type="match status" value="1"/>
</dbReference>
<dbReference type="Pfam" id="PF00005">
    <property type="entry name" value="ABC_tran"/>
    <property type="match status" value="1"/>
</dbReference>
<dbReference type="Pfam" id="PF17912">
    <property type="entry name" value="OB_MalK"/>
    <property type="match status" value="1"/>
</dbReference>
<dbReference type="SMART" id="SM00382">
    <property type="entry name" value="AAA"/>
    <property type="match status" value="1"/>
</dbReference>
<dbReference type="SUPFAM" id="SSF50331">
    <property type="entry name" value="MOP-like"/>
    <property type="match status" value="1"/>
</dbReference>
<dbReference type="SUPFAM" id="SSF52540">
    <property type="entry name" value="P-loop containing nucleoside triphosphate hydrolases"/>
    <property type="match status" value="1"/>
</dbReference>
<dbReference type="PROSITE" id="PS00211">
    <property type="entry name" value="ABC_TRANSPORTER_1"/>
    <property type="match status" value="1"/>
</dbReference>
<dbReference type="PROSITE" id="PS50893">
    <property type="entry name" value="ABC_TRANSPORTER_2"/>
    <property type="match status" value="1"/>
</dbReference>
<dbReference type="PROSITE" id="PS51315">
    <property type="entry name" value="UGPC"/>
    <property type="match status" value="1"/>
</dbReference>
<organism>
    <name type="scientific">Bordetella bronchiseptica (strain ATCC BAA-588 / NCTC 13252 / RB50)</name>
    <name type="common">Alcaligenes bronchisepticus</name>
    <dbReference type="NCBI Taxonomy" id="257310"/>
    <lineage>
        <taxon>Bacteria</taxon>
        <taxon>Pseudomonadati</taxon>
        <taxon>Pseudomonadota</taxon>
        <taxon>Betaproteobacteria</taxon>
        <taxon>Burkholderiales</taxon>
        <taxon>Alcaligenaceae</taxon>
        <taxon>Bordetella</taxon>
    </lineage>
</organism>
<accession>Q7WID6</accession>
<proteinExistence type="inferred from homology"/>
<protein>
    <recommendedName>
        <fullName evidence="1">sn-glycerol-3-phosphate import ATP-binding protein UgpC</fullName>
        <ecNumber evidence="1">7.6.2.10</ecNumber>
    </recommendedName>
</protein>
<comment type="function">
    <text evidence="1">Part of the ABC transporter complex UgpBAEC involved in sn-glycerol-3-phosphate (G3P) import. Responsible for energy coupling to the transport system.</text>
</comment>
<comment type="catalytic activity">
    <reaction evidence="1">
        <text>sn-glycerol 3-phosphate(out) + ATP + H2O = sn-glycerol 3-phosphate(in) + ADP + phosphate + H(+)</text>
        <dbReference type="Rhea" id="RHEA:21668"/>
        <dbReference type="ChEBI" id="CHEBI:15377"/>
        <dbReference type="ChEBI" id="CHEBI:15378"/>
        <dbReference type="ChEBI" id="CHEBI:30616"/>
        <dbReference type="ChEBI" id="CHEBI:43474"/>
        <dbReference type="ChEBI" id="CHEBI:57597"/>
        <dbReference type="ChEBI" id="CHEBI:456216"/>
        <dbReference type="EC" id="7.6.2.10"/>
    </reaction>
</comment>
<comment type="subunit">
    <text evidence="1">The complex is composed of two ATP-binding proteins (UgpC), two transmembrane proteins (UgpA and UgpE) and a solute-binding protein (UgpB).</text>
</comment>
<comment type="subcellular location">
    <subcellularLocation>
        <location evidence="1">Cell inner membrane</location>
        <topology evidence="1">Peripheral membrane protein</topology>
    </subcellularLocation>
</comment>
<comment type="similarity">
    <text evidence="1">Belongs to the ABC transporter superfamily. sn-glycerol-3-phosphate importer (TC 3.A.1.1.3) family.</text>
</comment>
<keyword id="KW-0067">ATP-binding</keyword>
<keyword id="KW-0997">Cell inner membrane</keyword>
<keyword id="KW-1003">Cell membrane</keyword>
<keyword id="KW-0472">Membrane</keyword>
<keyword id="KW-0547">Nucleotide-binding</keyword>
<keyword id="KW-0762">Sugar transport</keyword>
<keyword id="KW-1278">Translocase</keyword>
<keyword id="KW-0813">Transport</keyword>
<gene>
    <name evidence="1" type="primary">ugpC</name>
    <name type="ordered locus">BB2915</name>
</gene>
<evidence type="ECO:0000255" key="1">
    <source>
        <dbReference type="HAMAP-Rule" id="MF_01727"/>
    </source>
</evidence>
<sequence>MATLSFRNVKKTYAGNVPVIHGIDMDVADGEFIVIVGPSGCGKSTLMRMVAGLETVTEGEILIDDKVVNTLEPAERDIAMVFQNYALYPHMSVFDNMAYGLKIRRLPKDEIRKRVEAAAQILELGKLLDRRPRALSGGQRQRVAMGRAIVREPKVFLFDEPLSNLDAKLRVAMRLEILKLHRRLNTTSLYVTHDQVEAMTLAHRMVVMYQGVPEQIGTPMEVFEKPASTFVAGFIGSPPMNLLEVAVGGDGIVHTSDGIALDISPLAVPQQVRGRKVVMGLRPEHMLLNAQGLAAEIEMIETLGSEQLVHGRCGKHMVVVRCSTRQFSETPARVGDTLTIGPDGRHPLHWFEADTGRRVEGL</sequence>